<keyword id="KW-0175">Coiled coil</keyword>
<keyword id="KW-0238">DNA-binding</keyword>
<keyword id="KW-0804">Transcription</keyword>
<keyword id="KW-0805">Transcription regulation</keyword>
<feature type="chain" id="PRO_1000094159" description="Transcription elongation factor GreA">
    <location>
        <begin position="1"/>
        <end position="160"/>
    </location>
</feature>
<feature type="coiled-coil region" evidence="1">
    <location>
        <begin position="49"/>
        <end position="75"/>
    </location>
</feature>
<accession>A6LPL4</accession>
<reference key="1">
    <citation type="submission" date="2007-06" db="EMBL/GenBank/DDBJ databases">
        <title>Complete sequence of Clostridium beijerinckii NCIMB 8052.</title>
        <authorList>
            <consortium name="US DOE Joint Genome Institute"/>
            <person name="Copeland A."/>
            <person name="Lucas S."/>
            <person name="Lapidus A."/>
            <person name="Barry K."/>
            <person name="Detter J.C."/>
            <person name="Glavina del Rio T."/>
            <person name="Hammon N."/>
            <person name="Israni S."/>
            <person name="Dalin E."/>
            <person name="Tice H."/>
            <person name="Pitluck S."/>
            <person name="Sims D."/>
            <person name="Brettin T."/>
            <person name="Bruce D."/>
            <person name="Tapia R."/>
            <person name="Brainard J."/>
            <person name="Schmutz J."/>
            <person name="Larimer F."/>
            <person name="Land M."/>
            <person name="Hauser L."/>
            <person name="Kyrpides N."/>
            <person name="Mikhailova N."/>
            <person name="Bennet G."/>
            <person name="Cann I."/>
            <person name="Chen J.-S."/>
            <person name="Contreras A.L."/>
            <person name="Jones D."/>
            <person name="Kashket E."/>
            <person name="Mitchell W."/>
            <person name="Stoddard S."/>
            <person name="Schwarz W."/>
            <person name="Qureshi N."/>
            <person name="Young M."/>
            <person name="Shi Z."/>
            <person name="Ezeji T."/>
            <person name="White B."/>
            <person name="Blaschek H."/>
            <person name="Richardson P."/>
        </authorList>
    </citation>
    <scope>NUCLEOTIDE SEQUENCE [LARGE SCALE GENOMIC DNA]</scope>
    <source>
        <strain>ATCC 51743 / NCIMB 8052</strain>
    </source>
</reference>
<dbReference type="EMBL" id="CP000721">
    <property type="protein sequence ID" value="ABR32294.1"/>
    <property type="molecule type" value="Genomic_DNA"/>
</dbReference>
<dbReference type="RefSeq" id="WP_011967468.1">
    <property type="nucleotide sequence ID" value="NC_009617.1"/>
</dbReference>
<dbReference type="SMR" id="A6LPL4"/>
<dbReference type="GeneID" id="66342983"/>
<dbReference type="KEGG" id="cbe:Cbei_0104"/>
<dbReference type="eggNOG" id="COG0782">
    <property type="taxonomic scope" value="Bacteria"/>
</dbReference>
<dbReference type="HOGENOM" id="CLU_101379_2_1_9"/>
<dbReference type="Proteomes" id="UP000000565">
    <property type="component" value="Chromosome"/>
</dbReference>
<dbReference type="GO" id="GO:0003677">
    <property type="term" value="F:DNA binding"/>
    <property type="evidence" value="ECO:0007669"/>
    <property type="project" value="UniProtKB-UniRule"/>
</dbReference>
<dbReference type="GO" id="GO:0070063">
    <property type="term" value="F:RNA polymerase binding"/>
    <property type="evidence" value="ECO:0007669"/>
    <property type="project" value="InterPro"/>
</dbReference>
<dbReference type="GO" id="GO:0006354">
    <property type="term" value="P:DNA-templated transcription elongation"/>
    <property type="evidence" value="ECO:0007669"/>
    <property type="project" value="TreeGrafter"/>
</dbReference>
<dbReference type="GO" id="GO:0032784">
    <property type="term" value="P:regulation of DNA-templated transcription elongation"/>
    <property type="evidence" value="ECO:0007669"/>
    <property type="project" value="UniProtKB-UniRule"/>
</dbReference>
<dbReference type="FunFam" id="1.10.287.180:FF:000001">
    <property type="entry name" value="Transcription elongation factor GreA"/>
    <property type="match status" value="1"/>
</dbReference>
<dbReference type="FunFam" id="3.10.50.30:FF:000001">
    <property type="entry name" value="Transcription elongation factor GreA"/>
    <property type="match status" value="1"/>
</dbReference>
<dbReference type="Gene3D" id="3.10.50.30">
    <property type="entry name" value="Transcription elongation factor, GreA/GreB, C-terminal domain"/>
    <property type="match status" value="1"/>
</dbReference>
<dbReference type="Gene3D" id="1.10.287.180">
    <property type="entry name" value="Transcription elongation factor, GreA/GreB, N-terminal domain"/>
    <property type="match status" value="1"/>
</dbReference>
<dbReference type="HAMAP" id="MF_00105">
    <property type="entry name" value="GreA_GreB"/>
    <property type="match status" value="1"/>
</dbReference>
<dbReference type="InterPro" id="IPR036953">
    <property type="entry name" value="GreA/GreB_C_sf"/>
</dbReference>
<dbReference type="InterPro" id="IPR018151">
    <property type="entry name" value="TF_GreA/GreB_CS"/>
</dbReference>
<dbReference type="InterPro" id="IPR006359">
    <property type="entry name" value="Tscrpt_elong_fac_GreA"/>
</dbReference>
<dbReference type="InterPro" id="IPR028624">
    <property type="entry name" value="Tscrpt_elong_fac_GreA/B"/>
</dbReference>
<dbReference type="InterPro" id="IPR001437">
    <property type="entry name" value="Tscrpt_elong_fac_GreA/B_C"/>
</dbReference>
<dbReference type="InterPro" id="IPR023459">
    <property type="entry name" value="Tscrpt_elong_fac_GreA/B_fam"/>
</dbReference>
<dbReference type="InterPro" id="IPR022691">
    <property type="entry name" value="Tscrpt_elong_fac_GreA/B_N"/>
</dbReference>
<dbReference type="InterPro" id="IPR036805">
    <property type="entry name" value="Tscrpt_elong_fac_GreA/B_N_sf"/>
</dbReference>
<dbReference type="NCBIfam" id="TIGR01462">
    <property type="entry name" value="greA"/>
    <property type="match status" value="1"/>
</dbReference>
<dbReference type="NCBIfam" id="NF001261">
    <property type="entry name" value="PRK00226.1-2"/>
    <property type="match status" value="1"/>
</dbReference>
<dbReference type="NCBIfam" id="NF001263">
    <property type="entry name" value="PRK00226.1-4"/>
    <property type="match status" value="1"/>
</dbReference>
<dbReference type="PANTHER" id="PTHR30437">
    <property type="entry name" value="TRANSCRIPTION ELONGATION FACTOR GREA"/>
    <property type="match status" value="1"/>
</dbReference>
<dbReference type="PANTHER" id="PTHR30437:SF4">
    <property type="entry name" value="TRANSCRIPTION ELONGATION FACTOR GREA"/>
    <property type="match status" value="1"/>
</dbReference>
<dbReference type="Pfam" id="PF01272">
    <property type="entry name" value="GreA_GreB"/>
    <property type="match status" value="1"/>
</dbReference>
<dbReference type="Pfam" id="PF03449">
    <property type="entry name" value="GreA_GreB_N"/>
    <property type="match status" value="1"/>
</dbReference>
<dbReference type="PIRSF" id="PIRSF006092">
    <property type="entry name" value="GreA_GreB"/>
    <property type="match status" value="1"/>
</dbReference>
<dbReference type="SUPFAM" id="SSF54534">
    <property type="entry name" value="FKBP-like"/>
    <property type="match status" value="1"/>
</dbReference>
<dbReference type="SUPFAM" id="SSF46557">
    <property type="entry name" value="GreA transcript cleavage protein, N-terminal domain"/>
    <property type="match status" value="1"/>
</dbReference>
<dbReference type="PROSITE" id="PS00829">
    <property type="entry name" value="GREAB_1"/>
    <property type="match status" value="1"/>
</dbReference>
<dbReference type="PROSITE" id="PS00830">
    <property type="entry name" value="GREAB_2"/>
    <property type="match status" value="1"/>
</dbReference>
<name>GREA_CLOB8</name>
<evidence type="ECO:0000255" key="1">
    <source>
        <dbReference type="HAMAP-Rule" id="MF_00105"/>
    </source>
</evidence>
<gene>
    <name evidence="1" type="primary">greA</name>
    <name type="ordered locus">Cbei_0104</name>
</gene>
<proteinExistence type="inferred from homology"/>
<protein>
    <recommendedName>
        <fullName evidence="1">Transcription elongation factor GreA</fullName>
    </recommendedName>
    <alternativeName>
        <fullName evidence="1">Transcript cleavage factor GreA</fullName>
    </alternativeName>
</protein>
<comment type="function">
    <text evidence="1">Necessary for efficient RNA polymerase transcription elongation past template-encoded arresting sites. The arresting sites in DNA have the property of trapping a certain fraction of elongating RNA polymerases that pass through, resulting in locked ternary complexes. Cleavage of the nascent transcript by cleavage factors such as GreA or GreB allows the resumption of elongation from the new 3'terminus. GreA releases sequences of 2 to 3 nucleotides.</text>
</comment>
<comment type="similarity">
    <text evidence="1">Belongs to the GreA/GreB family.</text>
</comment>
<sequence length="160" mass="17780">MSQSKQYVMTYEGVKKLESELEYLKTVKRKEITEKIKIALGYGDLSENSEYDEAKNDQAFTEGRIIQLENMLKNAVVVDESEIPSDIVSVGSKVKVKDYEFDEEVEYSIVGSAEADPMNFKISNESPVGNALVGKKVGDVVEVTVPDGVNKFEILGISRS</sequence>
<organism>
    <name type="scientific">Clostridium beijerinckii (strain ATCC 51743 / NCIMB 8052)</name>
    <name type="common">Clostridium acetobutylicum</name>
    <dbReference type="NCBI Taxonomy" id="290402"/>
    <lineage>
        <taxon>Bacteria</taxon>
        <taxon>Bacillati</taxon>
        <taxon>Bacillota</taxon>
        <taxon>Clostridia</taxon>
        <taxon>Eubacteriales</taxon>
        <taxon>Clostridiaceae</taxon>
        <taxon>Clostridium</taxon>
    </lineage>
</organism>